<name>YEG5_SCHPO</name>
<dbReference type="EMBL" id="CU329670">
    <property type="protein sequence ID" value="CAB16191.1"/>
    <property type="molecule type" value="Genomic_DNA"/>
</dbReference>
<dbReference type="PIR" id="T38424">
    <property type="entry name" value="T38424"/>
</dbReference>
<dbReference type="SMR" id="O13987"/>
<dbReference type="BioGRID" id="279154">
    <property type="interactions" value="156"/>
</dbReference>
<dbReference type="FunCoup" id="O13987">
    <property type="interactions" value="265"/>
</dbReference>
<dbReference type="IntAct" id="O13987">
    <property type="interactions" value="2"/>
</dbReference>
<dbReference type="STRING" id="284812.O13987"/>
<dbReference type="iPTMnet" id="O13987"/>
<dbReference type="PaxDb" id="4896-SPAC26H5.05.1"/>
<dbReference type="EnsemblFungi" id="SPAC26H5.05.1">
    <property type="protein sequence ID" value="SPAC26H5.05.1:pep"/>
    <property type="gene ID" value="SPAC26H5.05"/>
</dbReference>
<dbReference type="KEGG" id="spo:2542701"/>
<dbReference type="PomBase" id="SPAC26H5.05"/>
<dbReference type="VEuPathDB" id="FungiDB:SPAC26H5.05"/>
<dbReference type="eggNOG" id="KOG3836">
    <property type="taxonomic scope" value="Eukaryota"/>
</dbReference>
<dbReference type="HOGENOM" id="CLU_284721_0_0_1"/>
<dbReference type="InParanoid" id="O13987"/>
<dbReference type="OMA" id="RVETNML"/>
<dbReference type="PhylomeDB" id="O13987"/>
<dbReference type="PRO" id="PR:O13987"/>
<dbReference type="Proteomes" id="UP000002485">
    <property type="component" value="Chromosome I"/>
</dbReference>
<dbReference type="GO" id="GO:0098554">
    <property type="term" value="C:cytoplasmic side of endoplasmic reticulum membrane"/>
    <property type="evidence" value="ECO:0000305"/>
    <property type="project" value="PomBase"/>
</dbReference>
<dbReference type="GO" id="GO:0000324">
    <property type="term" value="C:fungal-type vacuole"/>
    <property type="evidence" value="ECO:0007005"/>
    <property type="project" value="PomBase"/>
</dbReference>
<dbReference type="GO" id="GO:0005634">
    <property type="term" value="C:nucleus"/>
    <property type="evidence" value="ECO:0000269"/>
    <property type="project" value="PomBase"/>
</dbReference>
<dbReference type="GO" id="GO:0005774">
    <property type="term" value="C:vacuolar membrane"/>
    <property type="evidence" value="ECO:0007669"/>
    <property type="project" value="UniProtKB-SubCell"/>
</dbReference>
<dbReference type="GO" id="GO:0003690">
    <property type="term" value="F:double-stranded DNA binding"/>
    <property type="evidence" value="ECO:0000318"/>
    <property type="project" value="GO_Central"/>
</dbReference>
<dbReference type="GO" id="GO:0003713">
    <property type="term" value="F:transcription coactivator activity"/>
    <property type="evidence" value="ECO:0000269"/>
    <property type="project" value="PomBase"/>
</dbReference>
<dbReference type="GO" id="GO:0003712">
    <property type="term" value="F:transcription coregulator activity"/>
    <property type="evidence" value="ECO:0000318"/>
    <property type="project" value="GO_Central"/>
</dbReference>
<dbReference type="GO" id="GO:0045834">
    <property type="term" value="P:positive regulation of lipid metabolic process"/>
    <property type="evidence" value="ECO:0000269"/>
    <property type="project" value="PomBase"/>
</dbReference>
<dbReference type="GO" id="GO:0045944">
    <property type="term" value="P:positive regulation of transcription by RNA polymerase II"/>
    <property type="evidence" value="ECO:0000314"/>
    <property type="project" value="PomBase"/>
</dbReference>
<dbReference type="GO" id="GO:0006357">
    <property type="term" value="P:regulation of transcription by RNA polymerase II"/>
    <property type="evidence" value="ECO:0000318"/>
    <property type="project" value="GO_Central"/>
</dbReference>
<dbReference type="CDD" id="cd00102">
    <property type="entry name" value="IPT"/>
    <property type="match status" value="1"/>
</dbReference>
<dbReference type="Gene3D" id="1.25.40.20">
    <property type="entry name" value="Ankyrin repeat-containing domain"/>
    <property type="match status" value="1"/>
</dbReference>
<dbReference type="Gene3D" id="2.60.40.10">
    <property type="entry name" value="Immunoglobulins"/>
    <property type="match status" value="1"/>
</dbReference>
<dbReference type="InterPro" id="IPR002110">
    <property type="entry name" value="Ankyrin_rpt"/>
</dbReference>
<dbReference type="InterPro" id="IPR036770">
    <property type="entry name" value="Ankyrin_rpt-contain_sf"/>
</dbReference>
<dbReference type="InterPro" id="IPR013783">
    <property type="entry name" value="Ig-like_fold"/>
</dbReference>
<dbReference type="InterPro" id="IPR014756">
    <property type="entry name" value="Ig_E-set"/>
</dbReference>
<dbReference type="InterPro" id="IPR002909">
    <property type="entry name" value="IPT_dom"/>
</dbReference>
<dbReference type="PANTHER" id="PTHR23335">
    <property type="entry name" value="CALMODULIN-BINDING TRANSCRIPTION ACTIVATOR CAMTA"/>
    <property type="match status" value="1"/>
</dbReference>
<dbReference type="PANTHER" id="PTHR23335:SF1">
    <property type="entry name" value="CALMODULIN-BINDING TRANSCRIPTION ACTIVATOR, ISOFORM F"/>
    <property type="match status" value="1"/>
</dbReference>
<dbReference type="Pfam" id="PF12796">
    <property type="entry name" value="Ank_2"/>
    <property type="match status" value="1"/>
</dbReference>
<dbReference type="Pfam" id="PF01833">
    <property type="entry name" value="TIG"/>
    <property type="match status" value="1"/>
</dbReference>
<dbReference type="SMART" id="SM00248">
    <property type="entry name" value="ANK"/>
    <property type="match status" value="3"/>
</dbReference>
<dbReference type="SMART" id="SM00429">
    <property type="entry name" value="IPT"/>
    <property type="match status" value="1"/>
</dbReference>
<dbReference type="SUPFAM" id="SSF48403">
    <property type="entry name" value="Ankyrin repeat"/>
    <property type="match status" value="1"/>
</dbReference>
<dbReference type="SUPFAM" id="SSF81296">
    <property type="entry name" value="E set domains"/>
    <property type="match status" value="1"/>
</dbReference>
<dbReference type="PROSITE" id="PS50297">
    <property type="entry name" value="ANK_REP_REGION"/>
    <property type="match status" value="1"/>
</dbReference>
<dbReference type="PROSITE" id="PS50088">
    <property type="entry name" value="ANK_REPEAT"/>
    <property type="match status" value="2"/>
</dbReference>
<protein>
    <recommendedName>
        <fullName>Ankyrin and IPT/TIG repeat-containing protein C26H5.05</fullName>
    </recommendedName>
</protein>
<evidence type="ECO:0000255" key="1"/>
<evidence type="ECO:0000256" key="2">
    <source>
        <dbReference type="SAM" id="MobiDB-lite"/>
    </source>
</evidence>
<evidence type="ECO:0000269" key="3">
    <source>
    </source>
</evidence>
<keyword id="KW-0040">ANK repeat</keyword>
<keyword id="KW-0472">Membrane</keyword>
<keyword id="KW-1185">Reference proteome</keyword>
<keyword id="KW-0677">Repeat</keyword>
<keyword id="KW-0812">Transmembrane</keyword>
<keyword id="KW-1133">Transmembrane helix</keyword>
<keyword id="KW-0926">Vacuole</keyword>
<gene>
    <name type="ORF">SPAC26H5.05</name>
</gene>
<proteinExistence type="predicted"/>
<feature type="chain" id="PRO_0000316206" description="Ankyrin and IPT/TIG repeat-containing protein C26H5.05">
    <location>
        <begin position="1"/>
        <end position="1151"/>
    </location>
</feature>
<feature type="transmembrane region" description="Helical" evidence="1">
    <location>
        <begin position="1113"/>
        <end position="1133"/>
    </location>
</feature>
<feature type="domain" description="IPT/TIG">
    <location>
        <begin position="658"/>
        <end position="739"/>
    </location>
</feature>
<feature type="repeat" description="ANK 1">
    <location>
        <begin position="861"/>
        <end position="890"/>
    </location>
</feature>
<feature type="repeat" description="ANK 2">
    <location>
        <begin position="894"/>
        <end position="923"/>
    </location>
</feature>
<feature type="region of interest" description="Disordered" evidence="2">
    <location>
        <begin position="77"/>
        <end position="104"/>
    </location>
</feature>
<feature type="region of interest" description="Disordered" evidence="2">
    <location>
        <begin position="452"/>
        <end position="511"/>
    </location>
</feature>
<feature type="region of interest" description="Disordered" evidence="2">
    <location>
        <begin position="516"/>
        <end position="535"/>
    </location>
</feature>
<feature type="region of interest" description="Disordered" evidence="2">
    <location>
        <begin position="1041"/>
        <end position="1067"/>
    </location>
</feature>
<feature type="compositionally biased region" description="Polar residues" evidence="2">
    <location>
        <begin position="87"/>
        <end position="98"/>
    </location>
</feature>
<feature type="compositionally biased region" description="Basic and acidic residues" evidence="2">
    <location>
        <begin position="452"/>
        <end position="463"/>
    </location>
</feature>
<feature type="compositionally biased region" description="Polar residues" evidence="2">
    <location>
        <begin position="464"/>
        <end position="496"/>
    </location>
</feature>
<feature type="compositionally biased region" description="Polar residues" evidence="2">
    <location>
        <begin position="517"/>
        <end position="532"/>
    </location>
</feature>
<feature type="compositionally biased region" description="Basic and acidic residues" evidence="2">
    <location>
        <begin position="1058"/>
        <end position="1067"/>
    </location>
</feature>
<reference key="1">
    <citation type="journal article" date="2002" name="Nature">
        <title>The genome sequence of Schizosaccharomyces pombe.</title>
        <authorList>
            <person name="Wood V."/>
            <person name="Gwilliam R."/>
            <person name="Rajandream M.A."/>
            <person name="Lyne M.H."/>
            <person name="Lyne R."/>
            <person name="Stewart A."/>
            <person name="Sgouros J.G."/>
            <person name="Peat N."/>
            <person name="Hayles J."/>
            <person name="Baker S.G."/>
            <person name="Basham D."/>
            <person name="Bowman S."/>
            <person name="Brooks K."/>
            <person name="Brown D."/>
            <person name="Brown S."/>
            <person name="Chillingworth T."/>
            <person name="Churcher C.M."/>
            <person name="Collins M."/>
            <person name="Connor R."/>
            <person name="Cronin A."/>
            <person name="Davis P."/>
            <person name="Feltwell T."/>
            <person name="Fraser A."/>
            <person name="Gentles S."/>
            <person name="Goble A."/>
            <person name="Hamlin N."/>
            <person name="Harris D.E."/>
            <person name="Hidalgo J."/>
            <person name="Hodgson G."/>
            <person name="Holroyd S."/>
            <person name="Hornsby T."/>
            <person name="Howarth S."/>
            <person name="Huckle E.J."/>
            <person name="Hunt S."/>
            <person name="Jagels K."/>
            <person name="James K.D."/>
            <person name="Jones L."/>
            <person name="Jones M."/>
            <person name="Leather S."/>
            <person name="McDonald S."/>
            <person name="McLean J."/>
            <person name="Mooney P."/>
            <person name="Moule S."/>
            <person name="Mungall K.L."/>
            <person name="Murphy L.D."/>
            <person name="Niblett D."/>
            <person name="Odell C."/>
            <person name="Oliver K."/>
            <person name="O'Neil S."/>
            <person name="Pearson D."/>
            <person name="Quail M.A."/>
            <person name="Rabbinowitsch E."/>
            <person name="Rutherford K.M."/>
            <person name="Rutter S."/>
            <person name="Saunders D."/>
            <person name="Seeger K."/>
            <person name="Sharp S."/>
            <person name="Skelton J."/>
            <person name="Simmonds M.N."/>
            <person name="Squares R."/>
            <person name="Squares S."/>
            <person name="Stevens K."/>
            <person name="Taylor K."/>
            <person name="Taylor R.G."/>
            <person name="Tivey A."/>
            <person name="Walsh S.V."/>
            <person name="Warren T."/>
            <person name="Whitehead S."/>
            <person name="Woodward J.R."/>
            <person name="Volckaert G."/>
            <person name="Aert R."/>
            <person name="Robben J."/>
            <person name="Grymonprez B."/>
            <person name="Weltjens I."/>
            <person name="Vanstreels E."/>
            <person name="Rieger M."/>
            <person name="Schaefer M."/>
            <person name="Mueller-Auer S."/>
            <person name="Gabel C."/>
            <person name="Fuchs M."/>
            <person name="Duesterhoeft A."/>
            <person name="Fritzc C."/>
            <person name="Holzer E."/>
            <person name="Moestl D."/>
            <person name="Hilbert H."/>
            <person name="Borzym K."/>
            <person name="Langer I."/>
            <person name="Beck A."/>
            <person name="Lehrach H."/>
            <person name="Reinhardt R."/>
            <person name="Pohl T.M."/>
            <person name="Eger P."/>
            <person name="Zimmermann W."/>
            <person name="Wedler H."/>
            <person name="Wambutt R."/>
            <person name="Purnelle B."/>
            <person name="Goffeau A."/>
            <person name="Cadieu E."/>
            <person name="Dreano S."/>
            <person name="Gloux S."/>
            <person name="Lelaure V."/>
            <person name="Mottier S."/>
            <person name="Galibert F."/>
            <person name="Aves S.J."/>
            <person name="Xiang Z."/>
            <person name="Hunt C."/>
            <person name="Moore K."/>
            <person name="Hurst S.M."/>
            <person name="Lucas M."/>
            <person name="Rochet M."/>
            <person name="Gaillardin C."/>
            <person name="Tallada V.A."/>
            <person name="Garzon A."/>
            <person name="Thode G."/>
            <person name="Daga R.R."/>
            <person name="Cruzado L."/>
            <person name="Jimenez J."/>
            <person name="Sanchez M."/>
            <person name="del Rey F."/>
            <person name="Benito J."/>
            <person name="Dominguez A."/>
            <person name="Revuelta J.L."/>
            <person name="Moreno S."/>
            <person name="Armstrong J."/>
            <person name="Forsburg S.L."/>
            <person name="Cerutti L."/>
            <person name="Lowe T."/>
            <person name="McCombie W.R."/>
            <person name="Paulsen I."/>
            <person name="Potashkin J."/>
            <person name="Shpakovski G.V."/>
            <person name="Ussery D."/>
            <person name="Barrell B.G."/>
            <person name="Nurse P."/>
        </authorList>
    </citation>
    <scope>NUCLEOTIDE SEQUENCE [LARGE SCALE GENOMIC DNA]</scope>
    <source>
        <strain>972 / ATCC 24843</strain>
    </source>
</reference>
<reference key="2">
    <citation type="journal article" date="2006" name="Nat. Biotechnol.">
        <title>ORFeome cloning and global analysis of protein localization in the fission yeast Schizosaccharomyces pombe.</title>
        <authorList>
            <person name="Matsuyama A."/>
            <person name="Arai R."/>
            <person name="Yashiroda Y."/>
            <person name="Shirai A."/>
            <person name="Kamata A."/>
            <person name="Sekido S."/>
            <person name="Kobayashi Y."/>
            <person name="Hashimoto A."/>
            <person name="Hamamoto M."/>
            <person name="Hiraoka Y."/>
            <person name="Horinouchi S."/>
            <person name="Yoshida M."/>
        </authorList>
    </citation>
    <scope>SUBCELLULAR LOCATION [LARGE SCALE ANALYSIS]</scope>
</reference>
<sequence>MNLEFSFGNLIAKNTENSTKEEGTWEVNKLMKFSSEEGRSSSDDYMFSSPDFEKAGNGDAEMREFFNFDGLPDQGLNLPSIAPPSLSHASSPNLSNSQDEAECLPSDRQQDYINPSLHLNRTVFPTPQHSISDANFLANTVDQPLGDNPMFGESDVYLLKMDPMKQAPYEAGFNSVKSSGAIEDPLQFRQPITMLETPFNESINTLTPYAEDYAFSSLNTSAPPLSNKEYAFSVNHLPAINEHKWKSRVETNMLFELRIKSNDNQSVPFEYLRLPSWAHREDKKRSSKPQPLQPDPETVIHLVPTVLAGDKSSVVKTCCTRCLLRERKRNARSQATKDACMPNYTKLKAYERNMTDASPEEKQQFRIKLLNQFPKLEDIDEDRMIMVFTGPEYVRLQLDGNERVAHINARITCYSSHQSCPYFHIIWDLYSMSRLVDRLVFPEPVTVLDDHKSRNLTKSEKTGKSNSQQAPSNHVLSKSNTVPNLVTGFPTRSDNPPNEKRRRTSSSENSRALDIQLSASDSHSPNSKSTLKSVEGSAFSMSKSPSVLSMTTPSGVSPSISKNGFHVVRVPSDAAGFQQRQQQEEGVLEAHTNESAPIAPFPYCTDDFSFSVEEKSSVNNLLTQFDEVAKPDFVSTPIKENVDSSFINMTPPDVSHAPLISRIIPNKGSIMGGYEVTILGANFFNGLVCLFGDNPAAVTFSWSESTIIATCPPATNAGTVPVTFQNYNSSSEAPVMFTYEDNLDNELYKLTVQVLGLKLTGSIQNPLTLSKKLLSSWRDDFAQYITNSIKQPPNSESKGQSKKTLLHDSNMESLKSVISRIVKKDSNQSDDSVESTILAAFALVTDTTTPYLSDFSLVNESGRSLLHLTAACGLSNASTFLCNAGCDVNKRDALGYTPLHYASLYDHKDICVNLLSNGAKPDVIGASGKKPIDLSSSEPIKLVFKEANNEQAQSISRSLIKDSEGSINTNETLESTSIVNEIEESAVQTKSYSESMWNKTVTMFPSLQELPQNYMSEVPSMMQKAMLSTLKSISAIPDDVPPPYSEFADDTTAQAGSSKRDSAISEDPDHHKSVWWSLRWQSRLVGRGKSTALTPEETRAIQEQAKTLKKAGMDFMLFSFWLPALLLLSIFGLRSYAQMIGGYLYRCIIGI</sequence>
<organism>
    <name type="scientific">Schizosaccharomyces pombe (strain 972 / ATCC 24843)</name>
    <name type="common">Fission yeast</name>
    <dbReference type="NCBI Taxonomy" id="284812"/>
    <lineage>
        <taxon>Eukaryota</taxon>
        <taxon>Fungi</taxon>
        <taxon>Dikarya</taxon>
        <taxon>Ascomycota</taxon>
        <taxon>Taphrinomycotina</taxon>
        <taxon>Schizosaccharomycetes</taxon>
        <taxon>Schizosaccharomycetales</taxon>
        <taxon>Schizosaccharomycetaceae</taxon>
        <taxon>Schizosaccharomyces</taxon>
    </lineage>
</organism>
<comment type="subcellular location">
    <subcellularLocation>
        <location evidence="3">Vacuole membrane</location>
        <topology evidence="3">Single-pass membrane protein</topology>
    </subcellularLocation>
</comment>
<accession>O13987</accession>